<organismHost>
    <name type="scientific">Enterobacteriaceae</name>
    <dbReference type="NCBI Taxonomy" id="543"/>
</organismHost>
<name>FIBS_BPP1</name>
<evidence type="ECO:0000256" key="1">
    <source>
        <dbReference type="SAM" id="MobiDB-lite"/>
    </source>
</evidence>
<evidence type="ECO:0000305" key="2"/>
<keyword id="KW-0945">Host-virus interaction</keyword>
<keyword id="KW-1161">Viral attachment to host cell</keyword>
<keyword id="KW-1230">Viral tail fiber protein</keyword>
<keyword id="KW-1227">Viral tail protein</keyword>
<keyword id="KW-0946">Virion</keyword>
<keyword id="KW-1160">Virus entry into host cell</keyword>
<gene>
    <name type="primary">S</name>
    <name type="synonym">19</name>
</gene>
<sequence>MNDVTVVTSVTYPSSESLALVADVQYHEPYLSAALNRKFRGIVDPGFYAGFLPKPGGGMNLLITSVDGDKTAGAASVDIGEFYQVTIQQRKDISLALSAGKKYAIVLKGRYLLGEDTYQVNTASHIHAAEFVARTYTDSYQLGDGELLVCTVNIPASVSAITQEMIDTSERINRSIGIDISDSVTSTRSDVAASSLAVKKAYDLAKSKYTAQDASTTQKGLVQLSSATNSDSETMAATPKAVKSIKD</sequence>
<organism>
    <name type="scientific">Escherichia phage P1</name>
    <name type="common">Bacteriophage P1</name>
    <dbReference type="NCBI Taxonomy" id="2886926"/>
    <lineage>
        <taxon>Viruses</taxon>
        <taxon>Duplodnaviria</taxon>
        <taxon>Heunggongvirae</taxon>
        <taxon>Uroviricota</taxon>
        <taxon>Caudoviricetes</taxon>
        <taxon>Punavirus</taxon>
        <taxon>Punavirus P1</taxon>
    </lineage>
</organism>
<comment type="subcellular location">
    <subcellularLocation>
        <location evidence="2">Virion</location>
    </subcellularLocation>
</comment>
<comment type="similarity">
    <text evidence="2">Belongs to the tail fiber family.</text>
</comment>
<reference key="1">
    <citation type="journal article" date="1989" name="Gene">
        <title>Organization of the bacteriophage P1 tail-fibre operon.</title>
        <authorList>
            <person name="Guidolin A."/>
            <person name="Zingg J.-M."/>
            <person name="Arber W."/>
        </authorList>
    </citation>
    <scope>NUCLEOTIDE SEQUENCE [GENOMIC DNA]</scope>
</reference>
<accession>P22588</accession>
<protein>
    <recommendedName>
        <fullName>Major tail fiber protein S</fullName>
    </recommendedName>
</protein>
<proteinExistence type="inferred from homology"/>
<dbReference type="EMBL" id="M25470">
    <property type="protein sequence ID" value="AAA58778.1"/>
    <property type="molecule type" value="Genomic_DNA"/>
</dbReference>
<dbReference type="PIR" id="PS0110">
    <property type="entry name" value="MFBPP1"/>
</dbReference>
<dbReference type="GO" id="GO:0098024">
    <property type="term" value="C:virus tail, fiber"/>
    <property type="evidence" value="ECO:0007669"/>
    <property type="project" value="UniProtKB-KW"/>
</dbReference>
<dbReference type="GO" id="GO:0046718">
    <property type="term" value="P:symbiont entry into host cell"/>
    <property type="evidence" value="ECO:0007669"/>
    <property type="project" value="UniProtKB-KW"/>
</dbReference>
<dbReference type="GO" id="GO:0019062">
    <property type="term" value="P:virion attachment to host cell"/>
    <property type="evidence" value="ECO:0007669"/>
    <property type="project" value="UniProtKB-KW"/>
</dbReference>
<dbReference type="InterPro" id="IPR005068">
    <property type="entry name" value="Phage_lambda_Stf-r2"/>
</dbReference>
<dbReference type="InterPro" id="IPR051934">
    <property type="entry name" value="Phage_Tail_Fiber_Structural"/>
</dbReference>
<dbReference type="PANTHER" id="PTHR35191">
    <property type="entry name" value="PROPHAGE SIDE TAIL FIBER PROTEIN HOMOLOG STFQ-RELATED"/>
    <property type="match status" value="1"/>
</dbReference>
<dbReference type="PANTHER" id="PTHR35191:SF1">
    <property type="entry name" value="PROPHAGE SIDE TAIL FIBER PROTEIN HOMOLOG STFQ-RELATED"/>
    <property type="match status" value="1"/>
</dbReference>
<dbReference type="Pfam" id="PF03406">
    <property type="entry name" value="Phage_fiber_2"/>
    <property type="match status" value="2"/>
</dbReference>
<feature type="chain" id="PRO_0000165287" description="Major tail fiber protein S">
    <location>
        <begin position="1"/>
        <end position="247" status="greater than"/>
    </location>
</feature>
<feature type="region of interest" description="Disordered" evidence="1">
    <location>
        <begin position="225"/>
        <end position="247"/>
    </location>
</feature>
<feature type="compositionally biased region" description="Polar residues" evidence="1">
    <location>
        <begin position="225"/>
        <end position="235"/>
    </location>
</feature>
<feature type="non-terminal residue">
    <location>
        <position position="247"/>
    </location>
</feature>